<organism>
    <name type="scientific">Shewanella oneidensis (strain ATCC 700550 / JCM 31522 / CIP 106686 / LMG 19005 / NCIMB 14063 / MR-1)</name>
    <dbReference type="NCBI Taxonomy" id="211586"/>
    <lineage>
        <taxon>Bacteria</taxon>
        <taxon>Pseudomonadati</taxon>
        <taxon>Pseudomonadota</taxon>
        <taxon>Gammaproteobacteria</taxon>
        <taxon>Alteromonadales</taxon>
        <taxon>Shewanellaceae</taxon>
        <taxon>Shewanella</taxon>
    </lineage>
</organism>
<comment type="function">
    <text evidence="1">Catalyzes the attachment of valine to tRNA(Val). As ValRS can inadvertently accommodate and process structurally similar amino acids such as threonine, to avoid such errors, it has a 'posttransfer' editing activity that hydrolyzes mischarged Thr-tRNA(Val) in a tRNA-dependent manner.</text>
</comment>
<comment type="catalytic activity">
    <reaction evidence="1">
        <text>tRNA(Val) + L-valine + ATP = L-valyl-tRNA(Val) + AMP + diphosphate</text>
        <dbReference type="Rhea" id="RHEA:10704"/>
        <dbReference type="Rhea" id="RHEA-COMP:9672"/>
        <dbReference type="Rhea" id="RHEA-COMP:9708"/>
        <dbReference type="ChEBI" id="CHEBI:30616"/>
        <dbReference type="ChEBI" id="CHEBI:33019"/>
        <dbReference type="ChEBI" id="CHEBI:57762"/>
        <dbReference type="ChEBI" id="CHEBI:78442"/>
        <dbReference type="ChEBI" id="CHEBI:78537"/>
        <dbReference type="ChEBI" id="CHEBI:456215"/>
        <dbReference type="EC" id="6.1.1.9"/>
    </reaction>
</comment>
<comment type="subunit">
    <text evidence="1">Monomer.</text>
</comment>
<comment type="subcellular location">
    <subcellularLocation>
        <location evidence="1">Cytoplasm</location>
    </subcellularLocation>
</comment>
<comment type="domain">
    <text evidence="1">ValRS has two distinct active sites: one for aminoacylation and one for editing. The misactivated threonine is translocated from the active site to the editing site.</text>
</comment>
<comment type="domain">
    <text evidence="1">The C-terminal coiled-coil domain is crucial for aminoacylation activity.</text>
</comment>
<comment type="similarity">
    <text evidence="1">Belongs to the class-I aminoacyl-tRNA synthetase family. ValS type 1 subfamily.</text>
</comment>
<gene>
    <name evidence="1" type="primary">valS</name>
    <name type="ordered locus">SO_3424</name>
</gene>
<accession>Q8EBS5</accession>
<dbReference type="EC" id="6.1.1.9" evidence="1"/>
<dbReference type="EMBL" id="AE014299">
    <property type="protein sequence ID" value="AAN56421.1"/>
    <property type="molecule type" value="Genomic_DNA"/>
</dbReference>
<dbReference type="RefSeq" id="NP_718977.1">
    <property type="nucleotide sequence ID" value="NC_004347.2"/>
</dbReference>
<dbReference type="RefSeq" id="WP_011073282.1">
    <property type="nucleotide sequence ID" value="NC_004347.2"/>
</dbReference>
<dbReference type="SMR" id="Q8EBS5"/>
<dbReference type="STRING" id="211586.SO_3424"/>
<dbReference type="PaxDb" id="211586-SO_3424"/>
<dbReference type="KEGG" id="son:SO_3424"/>
<dbReference type="PATRIC" id="fig|211586.12.peg.3319"/>
<dbReference type="eggNOG" id="COG0525">
    <property type="taxonomic scope" value="Bacteria"/>
</dbReference>
<dbReference type="HOGENOM" id="CLU_001493_0_2_6"/>
<dbReference type="OrthoDB" id="9810365at2"/>
<dbReference type="PhylomeDB" id="Q8EBS5"/>
<dbReference type="BioCyc" id="SONE211586:G1GMP-3188-MONOMER"/>
<dbReference type="Proteomes" id="UP000008186">
    <property type="component" value="Chromosome"/>
</dbReference>
<dbReference type="GO" id="GO:0005829">
    <property type="term" value="C:cytosol"/>
    <property type="evidence" value="ECO:0000318"/>
    <property type="project" value="GO_Central"/>
</dbReference>
<dbReference type="GO" id="GO:0002161">
    <property type="term" value="F:aminoacyl-tRNA deacylase activity"/>
    <property type="evidence" value="ECO:0007669"/>
    <property type="project" value="InterPro"/>
</dbReference>
<dbReference type="GO" id="GO:0005524">
    <property type="term" value="F:ATP binding"/>
    <property type="evidence" value="ECO:0007669"/>
    <property type="project" value="UniProtKB-UniRule"/>
</dbReference>
<dbReference type="GO" id="GO:0004832">
    <property type="term" value="F:valine-tRNA ligase activity"/>
    <property type="evidence" value="ECO:0000318"/>
    <property type="project" value="GO_Central"/>
</dbReference>
<dbReference type="GO" id="GO:0006438">
    <property type="term" value="P:valyl-tRNA aminoacylation"/>
    <property type="evidence" value="ECO:0000318"/>
    <property type="project" value="GO_Central"/>
</dbReference>
<dbReference type="CDD" id="cd07962">
    <property type="entry name" value="Anticodon_Ia_Val"/>
    <property type="match status" value="1"/>
</dbReference>
<dbReference type="CDD" id="cd00817">
    <property type="entry name" value="ValRS_core"/>
    <property type="match status" value="1"/>
</dbReference>
<dbReference type="FunFam" id="1.10.287.380:FF:000001">
    <property type="entry name" value="Valine--tRNA ligase"/>
    <property type="match status" value="1"/>
</dbReference>
<dbReference type="FunFam" id="1.10.730.10:FF:000007">
    <property type="entry name" value="Valine--tRNA ligase"/>
    <property type="match status" value="1"/>
</dbReference>
<dbReference type="FunFam" id="3.40.50.620:FF:000032">
    <property type="entry name" value="Valine--tRNA ligase"/>
    <property type="match status" value="1"/>
</dbReference>
<dbReference type="FunFam" id="3.40.50.620:FF:000146">
    <property type="entry name" value="Valine--tRNA ligase"/>
    <property type="match status" value="1"/>
</dbReference>
<dbReference type="FunFam" id="3.90.740.10:FF:000003">
    <property type="entry name" value="Valine--tRNA ligase"/>
    <property type="match status" value="1"/>
</dbReference>
<dbReference type="FunFam" id="3.90.740.10:FF:000042">
    <property type="entry name" value="Valine--tRNA ligase"/>
    <property type="match status" value="1"/>
</dbReference>
<dbReference type="Gene3D" id="3.40.50.620">
    <property type="entry name" value="HUPs"/>
    <property type="match status" value="2"/>
</dbReference>
<dbReference type="Gene3D" id="1.10.730.10">
    <property type="entry name" value="Isoleucyl-tRNA Synthetase, Domain 1"/>
    <property type="match status" value="1"/>
</dbReference>
<dbReference type="Gene3D" id="1.10.287.380">
    <property type="entry name" value="Valyl-tRNA synthetase, C-terminal domain"/>
    <property type="match status" value="1"/>
</dbReference>
<dbReference type="Gene3D" id="3.90.740.10">
    <property type="entry name" value="Valyl/Leucyl/Isoleucyl-tRNA synthetase, editing domain"/>
    <property type="match status" value="2"/>
</dbReference>
<dbReference type="HAMAP" id="MF_02004">
    <property type="entry name" value="Val_tRNA_synth_type1"/>
    <property type="match status" value="1"/>
</dbReference>
<dbReference type="InterPro" id="IPR001412">
    <property type="entry name" value="aa-tRNA-synth_I_CS"/>
</dbReference>
<dbReference type="InterPro" id="IPR002300">
    <property type="entry name" value="aa-tRNA-synth_Ia"/>
</dbReference>
<dbReference type="InterPro" id="IPR033705">
    <property type="entry name" value="Anticodon_Ia_Val"/>
</dbReference>
<dbReference type="InterPro" id="IPR013155">
    <property type="entry name" value="M/V/L/I-tRNA-synth_anticd-bd"/>
</dbReference>
<dbReference type="InterPro" id="IPR014729">
    <property type="entry name" value="Rossmann-like_a/b/a_fold"/>
</dbReference>
<dbReference type="InterPro" id="IPR010978">
    <property type="entry name" value="tRNA-bd_arm"/>
</dbReference>
<dbReference type="InterPro" id="IPR009080">
    <property type="entry name" value="tRNAsynth_Ia_anticodon-bd"/>
</dbReference>
<dbReference type="InterPro" id="IPR037118">
    <property type="entry name" value="Val-tRNA_synth_C_sf"/>
</dbReference>
<dbReference type="InterPro" id="IPR019499">
    <property type="entry name" value="Val-tRNA_synth_tRNA-bd"/>
</dbReference>
<dbReference type="InterPro" id="IPR009008">
    <property type="entry name" value="Val/Leu/Ile-tRNA-synth_edit"/>
</dbReference>
<dbReference type="InterPro" id="IPR002303">
    <property type="entry name" value="Valyl-tRNA_ligase"/>
</dbReference>
<dbReference type="NCBIfam" id="NF004349">
    <property type="entry name" value="PRK05729.1"/>
    <property type="match status" value="1"/>
</dbReference>
<dbReference type="NCBIfam" id="TIGR00422">
    <property type="entry name" value="valS"/>
    <property type="match status" value="1"/>
</dbReference>
<dbReference type="PANTHER" id="PTHR11946:SF93">
    <property type="entry name" value="VALINE--TRNA LIGASE, CHLOROPLASTIC_MITOCHONDRIAL 2"/>
    <property type="match status" value="1"/>
</dbReference>
<dbReference type="PANTHER" id="PTHR11946">
    <property type="entry name" value="VALYL-TRNA SYNTHETASES"/>
    <property type="match status" value="1"/>
</dbReference>
<dbReference type="Pfam" id="PF08264">
    <property type="entry name" value="Anticodon_1"/>
    <property type="match status" value="1"/>
</dbReference>
<dbReference type="Pfam" id="PF00133">
    <property type="entry name" value="tRNA-synt_1"/>
    <property type="match status" value="1"/>
</dbReference>
<dbReference type="Pfam" id="PF10458">
    <property type="entry name" value="Val_tRNA-synt_C"/>
    <property type="match status" value="1"/>
</dbReference>
<dbReference type="PRINTS" id="PR00986">
    <property type="entry name" value="TRNASYNTHVAL"/>
</dbReference>
<dbReference type="SUPFAM" id="SSF47323">
    <property type="entry name" value="Anticodon-binding domain of a subclass of class I aminoacyl-tRNA synthetases"/>
    <property type="match status" value="1"/>
</dbReference>
<dbReference type="SUPFAM" id="SSF52374">
    <property type="entry name" value="Nucleotidylyl transferase"/>
    <property type="match status" value="1"/>
</dbReference>
<dbReference type="SUPFAM" id="SSF46589">
    <property type="entry name" value="tRNA-binding arm"/>
    <property type="match status" value="1"/>
</dbReference>
<dbReference type="SUPFAM" id="SSF50677">
    <property type="entry name" value="ValRS/IleRS/LeuRS editing domain"/>
    <property type="match status" value="1"/>
</dbReference>
<dbReference type="PROSITE" id="PS00178">
    <property type="entry name" value="AA_TRNA_LIGASE_I"/>
    <property type="match status" value="1"/>
</dbReference>
<sequence length="958" mass="108756">MEKTYDPQSIEQTLYQNWEEKGYFKPHGDASQGNYCIMIPPPNVTGSLHMGHAFQDTIMDTLIRYQRMKGKNTLWQVGTDHAGIATQMLVERKLEAEEGKSRHDLGRDVFMEKVWEWKAQSGGTITKQLRRMGASVDWDRERFTMDEGLSKAVQEVFVRLYEDDLIYRGKRLVNWDPKLHTAISDLEVENKEKQGHMWHLRYPLADGELTADGKDYLEVATTRPETMLGDSAVAVHPDDERYQALIGKYILLPIVNRRIPIVADDYVDMAFGTGCVKITPAHDFNDYEVGKRHKLPMFNVLTLDAAIRSSAEVVNTDGTINTSLDGSLPERYAGLDRFKARDAIVAEFETLGLLEKIAPHGLKVPYGDRSGVVIEPMLTDQWYVAVAPMAKTAIEAVENGDIKFVPQQYENMYFSWMRDIQDWCISRQLWWGHRIPAWYDTNGKVYVGRTEAEVRAKHDIDDAIALRQDEDVLDTWFSSALWTFSTLGWPDNVEDLKTFHPTDVLVTGFDIIFFWVARMIMMTMHFIKDEDGKPQVPFKTVYVTGLIRDEAGNKMSKSKGNVLDPLDMIDGIDLETLVEKRTGNMMQPQLAAKIEKSTRKEFENGIEAHGTDALRFTLAAMASTGRDINWDMKRLDGYRSFCNKLWNASRYVLMNTEGQDCGPNSPDYQGGEMELSLADRWIIDLFNQTVKTYDEHMASYRFDLAANTLYEFTWNQFCDWYLELTKPVLQNGTEAQMRGTRHTLVNVLEAMQRLMHPMMPYITETIWQRVKPLTGVQGDTIMLAPFPAFDAAKVDATAMADLEWVKQVIVAVRNIRAELNIAPSKPLNALLRGVSAQDKARIEANQAFFATLARLESMTILGEGETAPMSTTGLIGEMELLIPMAGLVDVAAEMARIDKQLEKLTQEIARIEGKLSNEGFVAKAPPAVIDKERAKMADLSRDIDKLTEQKAEFAKLEA</sequence>
<protein>
    <recommendedName>
        <fullName evidence="1">Valine--tRNA ligase</fullName>
        <ecNumber evidence="1">6.1.1.9</ecNumber>
    </recommendedName>
    <alternativeName>
        <fullName evidence="1">Valyl-tRNA synthetase</fullName>
        <shortName evidence="1">ValRS</shortName>
    </alternativeName>
</protein>
<evidence type="ECO:0000255" key="1">
    <source>
        <dbReference type="HAMAP-Rule" id="MF_02004"/>
    </source>
</evidence>
<name>SYV_SHEON</name>
<reference key="1">
    <citation type="journal article" date="2002" name="Nat. Biotechnol.">
        <title>Genome sequence of the dissimilatory metal ion-reducing bacterium Shewanella oneidensis.</title>
        <authorList>
            <person name="Heidelberg J.F."/>
            <person name="Paulsen I.T."/>
            <person name="Nelson K.E."/>
            <person name="Gaidos E.J."/>
            <person name="Nelson W.C."/>
            <person name="Read T.D."/>
            <person name="Eisen J.A."/>
            <person name="Seshadri R."/>
            <person name="Ward N.L."/>
            <person name="Methe B.A."/>
            <person name="Clayton R.A."/>
            <person name="Meyer T."/>
            <person name="Tsapin A."/>
            <person name="Scott J."/>
            <person name="Beanan M.J."/>
            <person name="Brinkac L.M."/>
            <person name="Daugherty S.C."/>
            <person name="DeBoy R.T."/>
            <person name="Dodson R.J."/>
            <person name="Durkin A.S."/>
            <person name="Haft D.H."/>
            <person name="Kolonay J.F."/>
            <person name="Madupu R."/>
            <person name="Peterson J.D."/>
            <person name="Umayam L.A."/>
            <person name="White O."/>
            <person name="Wolf A.M."/>
            <person name="Vamathevan J.J."/>
            <person name="Weidman J.F."/>
            <person name="Impraim M."/>
            <person name="Lee K."/>
            <person name="Berry K.J."/>
            <person name="Lee C."/>
            <person name="Mueller J."/>
            <person name="Khouri H.M."/>
            <person name="Gill J."/>
            <person name="Utterback T.R."/>
            <person name="McDonald L.A."/>
            <person name="Feldblyum T.V."/>
            <person name="Smith H.O."/>
            <person name="Venter J.C."/>
            <person name="Nealson K.H."/>
            <person name="Fraser C.M."/>
        </authorList>
    </citation>
    <scope>NUCLEOTIDE SEQUENCE [LARGE SCALE GENOMIC DNA]</scope>
    <source>
        <strain>ATCC 700550 / JCM 31522 / CIP 106686 / LMG 19005 / NCIMB 14063 / MR-1</strain>
    </source>
</reference>
<proteinExistence type="inferred from homology"/>
<feature type="chain" id="PRO_0000224553" description="Valine--tRNA ligase">
    <location>
        <begin position="1"/>
        <end position="958"/>
    </location>
</feature>
<feature type="coiled-coil region" evidence="1">
    <location>
        <begin position="887"/>
        <end position="956"/>
    </location>
</feature>
<feature type="short sequence motif" description="'HIGH' region">
    <location>
        <begin position="42"/>
        <end position="52"/>
    </location>
</feature>
<feature type="short sequence motif" description="'KMSKS' region">
    <location>
        <begin position="554"/>
        <end position="558"/>
    </location>
</feature>
<feature type="binding site" evidence="1">
    <location>
        <position position="557"/>
    </location>
    <ligand>
        <name>ATP</name>
        <dbReference type="ChEBI" id="CHEBI:30616"/>
    </ligand>
</feature>
<keyword id="KW-0030">Aminoacyl-tRNA synthetase</keyword>
<keyword id="KW-0067">ATP-binding</keyword>
<keyword id="KW-0175">Coiled coil</keyword>
<keyword id="KW-0963">Cytoplasm</keyword>
<keyword id="KW-0436">Ligase</keyword>
<keyword id="KW-0547">Nucleotide-binding</keyword>
<keyword id="KW-0648">Protein biosynthesis</keyword>
<keyword id="KW-1185">Reference proteome</keyword>